<protein>
    <recommendedName>
        <fullName evidence="1">Glycerol-3-phosphate acyltransferase</fullName>
        <shortName evidence="1">GPAT</shortName>
        <ecNumber evidence="1">2.3.1.15</ecNumber>
    </recommendedName>
</protein>
<gene>
    <name evidence="1" type="primary">plsB</name>
    <name type="ordered locus">YPA_3972</name>
</gene>
<proteinExistence type="inferred from homology"/>
<accession>Q1C0T9</accession>
<name>PLSB_YERPA</name>
<comment type="catalytic activity">
    <reaction evidence="1">
        <text>sn-glycerol 3-phosphate + an acyl-CoA = a 1-acyl-sn-glycero-3-phosphate + CoA</text>
        <dbReference type="Rhea" id="RHEA:15325"/>
        <dbReference type="ChEBI" id="CHEBI:57287"/>
        <dbReference type="ChEBI" id="CHEBI:57597"/>
        <dbReference type="ChEBI" id="CHEBI:57970"/>
        <dbReference type="ChEBI" id="CHEBI:58342"/>
        <dbReference type="EC" id="2.3.1.15"/>
    </reaction>
</comment>
<comment type="pathway">
    <text evidence="1">Phospholipid metabolism; CDP-diacylglycerol biosynthesis; CDP-diacylglycerol from sn-glycerol 3-phosphate: step 1/3.</text>
</comment>
<comment type="subcellular location">
    <subcellularLocation>
        <location evidence="1">Cell inner membrane</location>
        <topology evidence="1">Peripheral membrane protein</topology>
        <orientation evidence="1">Cytoplasmic side</orientation>
    </subcellularLocation>
</comment>
<comment type="domain">
    <text evidence="1">The HXXXXD motif is essential for acyltransferase activity and may constitute the binding site for the phosphate moiety of the glycerol-3-phosphate.</text>
</comment>
<comment type="similarity">
    <text evidence="1">Belongs to the GPAT/DAPAT family.</text>
</comment>
<feature type="chain" id="PRO_1000049471" description="Glycerol-3-phosphate acyltransferase">
    <location>
        <begin position="1"/>
        <end position="825"/>
    </location>
</feature>
<feature type="region of interest" description="Disordered" evidence="2">
    <location>
        <begin position="803"/>
        <end position="825"/>
    </location>
</feature>
<feature type="short sequence motif" description="HXXXXD motif">
    <location>
        <begin position="304"/>
        <end position="309"/>
    </location>
</feature>
<evidence type="ECO:0000255" key="1">
    <source>
        <dbReference type="HAMAP-Rule" id="MF_00393"/>
    </source>
</evidence>
<evidence type="ECO:0000256" key="2">
    <source>
        <dbReference type="SAM" id="MobiDB-lite"/>
    </source>
</evidence>
<keyword id="KW-0012">Acyltransferase</keyword>
<keyword id="KW-0997">Cell inner membrane</keyword>
<keyword id="KW-1003">Cell membrane</keyword>
<keyword id="KW-0444">Lipid biosynthesis</keyword>
<keyword id="KW-0443">Lipid metabolism</keyword>
<keyword id="KW-0472">Membrane</keyword>
<keyword id="KW-0594">Phospholipid biosynthesis</keyword>
<keyword id="KW-1208">Phospholipid metabolism</keyword>
<keyword id="KW-0808">Transferase</keyword>
<reference key="1">
    <citation type="journal article" date="2006" name="J. Bacteriol.">
        <title>Complete genome sequence of Yersinia pestis strains Antiqua and Nepal516: evidence of gene reduction in an emerging pathogen.</title>
        <authorList>
            <person name="Chain P.S.G."/>
            <person name="Hu P."/>
            <person name="Malfatti S.A."/>
            <person name="Radnedge L."/>
            <person name="Larimer F."/>
            <person name="Vergez L.M."/>
            <person name="Worsham P."/>
            <person name="Chu M.C."/>
            <person name="Andersen G.L."/>
        </authorList>
    </citation>
    <scope>NUCLEOTIDE SEQUENCE [LARGE SCALE GENOMIC DNA]</scope>
    <source>
        <strain>Antiqua</strain>
    </source>
</reference>
<organism>
    <name type="scientific">Yersinia pestis bv. Antiqua (strain Antiqua)</name>
    <dbReference type="NCBI Taxonomy" id="360102"/>
    <lineage>
        <taxon>Bacteria</taxon>
        <taxon>Pseudomonadati</taxon>
        <taxon>Pseudomonadota</taxon>
        <taxon>Gammaproteobacteria</taxon>
        <taxon>Enterobacterales</taxon>
        <taxon>Yersiniaceae</taxon>
        <taxon>Yersinia</taxon>
    </lineage>
</organism>
<dbReference type="EC" id="2.3.1.15" evidence="1"/>
<dbReference type="EMBL" id="CP000308">
    <property type="protein sequence ID" value="ABG15933.1"/>
    <property type="molecule type" value="Genomic_DNA"/>
</dbReference>
<dbReference type="RefSeq" id="WP_002214644.1">
    <property type="nucleotide sequence ID" value="NC_008150.1"/>
</dbReference>
<dbReference type="SMR" id="Q1C0T9"/>
<dbReference type="GeneID" id="57974292"/>
<dbReference type="KEGG" id="ypa:YPA_3972"/>
<dbReference type="UniPathway" id="UPA00557">
    <property type="reaction ID" value="UER00612"/>
</dbReference>
<dbReference type="Proteomes" id="UP000001971">
    <property type="component" value="Chromosome"/>
</dbReference>
<dbReference type="GO" id="GO:0005886">
    <property type="term" value="C:plasma membrane"/>
    <property type="evidence" value="ECO:0007669"/>
    <property type="project" value="UniProtKB-SubCell"/>
</dbReference>
<dbReference type="GO" id="GO:0004366">
    <property type="term" value="F:glycerol-3-phosphate O-acyltransferase activity"/>
    <property type="evidence" value="ECO:0007669"/>
    <property type="project" value="UniProtKB-UniRule"/>
</dbReference>
<dbReference type="GO" id="GO:0016024">
    <property type="term" value="P:CDP-diacylglycerol biosynthetic process"/>
    <property type="evidence" value="ECO:0007669"/>
    <property type="project" value="UniProtKB-UniRule"/>
</dbReference>
<dbReference type="GO" id="GO:0006631">
    <property type="term" value="P:fatty acid metabolic process"/>
    <property type="evidence" value="ECO:0007669"/>
    <property type="project" value="TreeGrafter"/>
</dbReference>
<dbReference type="CDD" id="cd07993">
    <property type="entry name" value="LPLAT_DHAPAT-like"/>
    <property type="match status" value="1"/>
</dbReference>
<dbReference type="HAMAP" id="MF_00393">
    <property type="entry name" value="Glyc3P_acyltrans"/>
    <property type="match status" value="1"/>
</dbReference>
<dbReference type="InterPro" id="IPR022284">
    <property type="entry name" value="GPAT/DHAPAT"/>
</dbReference>
<dbReference type="InterPro" id="IPR045520">
    <property type="entry name" value="GPAT/DHAPAT_C"/>
</dbReference>
<dbReference type="InterPro" id="IPR041728">
    <property type="entry name" value="GPAT/DHAPAT_LPLAT"/>
</dbReference>
<dbReference type="InterPro" id="IPR028354">
    <property type="entry name" value="GPAT_PlsB"/>
</dbReference>
<dbReference type="InterPro" id="IPR002123">
    <property type="entry name" value="Plipid/glycerol_acylTrfase"/>
</dbReference>
<dbReference type="NCBIfam" id="TIGR03703">
    <property type="entry name" value="plsB"/>
    <property type="match status" value="1"/>
</dbReference>
<dbReference type="NCBIfam" id="NF003441">
    <property type="entry name" value="PRK04974.1"/>
    <property type="match status" value="1"/>
</dbReference>
<dbReference type="PANTHER" id="PTHR12563:SF17">
    <property type="entry name" value="DIHYDROXYACETONE PHOSPHATE ACYLTRANSFERASE"/>
    <property type="match status" value="1"/>
</dbReference>
<dbReference type="PANTHER" id="PTHR12563">
    <property type="entry name" value="GLYCEROL-3-PHOSPHATE ACYLTRANSFERASE"/>
    <property type="match status" value="1"/>
</dbReference>
<dbReference type="Pfam" id="PF01553">
    <property type="entry name" value="Acyltransferase"/>
    <property type="match status" value="1"/>
</dbReference>
<dbReference type="Pfam" id="PF19277">
    <property type="entry name" value="GPAT_C"/>
    <property type="match status" value="1"/>
</dbReference>
<dbReference type="PIRSF" id="PIRSF500064">
    <property type="entry name" value="GPAT"/>
    <property type="match status" value="1"/>
</dbReference>
<dbReference type="PIRSF" id="PIRSF000437">
    <property type="entry name" value="GPAT_DHAPAT"/>
    <property type="match status" value="1"/>
</dbReference>
<dbReference type="SMART" id="SM00563">
    <property type="entry name" value="PlsC"/>
    <property type="match status" value="1"/>
</dbReference>
<dbReference type="SUPFAM" id="SSF69593">
    <property type="entry name" value="Glycerol-3-phosphate (1)-acyltransferase"/>
    <property type="match status" value="1"/>
</dbReference>
<sequence>MSGWRKIYYKLLNLPLKLLVKSKVIPADPVSELGLDPSRPILYVLPYNSKADLLTLRAQCLAQDLPDPLIPLEIDGVQLPSHVFIENGPRVFRYYVPKQESVKLFHDYLDLHRNNPALDIQMLPVSVMFGRSPGREGHGTPHLRVLNGVQKFFAVLWLGRDSFVRFSTTVSLRRMASEHGTDKTIAHKLARVARMHFSRQRLAAVGPSLPARQDLFKKLLASKAIEKAVADEARSKKISHEKAQQNAITLMEEIAANFSYEAVRLSDRVLSWTWNRLYQGINVHNAERVRQLAQDGHEIVYVPCHRSHMDYLLLSYVLYHQGLVPPHIAAGINLNFWPAGPIFRRLGAFFIRRTFKGNKLYSTVFREYLGELFTRGYSVEYFVEGGRSRTGRLLEPKTGTLSMTIQAMLRGGTRPITLVPIYIGYEHVMEVGTYAKELRGAIKEKENLLQMLRGLRKLRNLGQGYVNFGEPLPLTTYLNTHVPQWRDAIDPIEAQRPSWLTPAVNDLANQIMVRINNAAAANAMNLCSTALLASRQRSLTREQLLEQLDCYLQLMRNAPYAKDTTVPDKTPEELLNHALNMNKFEVEKDTIGDIIILPREQAVLMTYYRNNIQHLLILPSLIASMVMYHRRITRTELLHKISMIYPMLKAELFLHYSKEQLPETLDTLIDELARQQLICDKGSELVLNPARIRPLQLLAAGVRETLQRYAITLSLLSATPSINRGALEKESRIMAQRLSVLHGINAPEFFDKAVFSTLVATLREEGYISDSGDAIQEHTLEVYNMLSALMTPEVKLTIESVSMPAETSNQPEAPETPEPEGKTES</sequence>